<organism>
    <name type="scientific">Nicotiana rustica</name>
    <name type="common">Aztec tobacco</name>
    <dbReference type="NCBI Taxonomy" id="4093"/>
    <lineage>
        <taxon>Eukaryota</taxon>
        <taxon>Viridiplantae</taxon>
        <taxon>Streptophyta</taxon>
        <taxon>Embryophyta</taxon>
        <taxon>Tracheophyta</taxon>
        <taxon>Spermatophyta</taxon>
        <taxon>Magnoliopsida</taxon>
        <taxon>eudicotyledons</taxon>
        <taxon>Gunneridae</taxon>
        <taxon>Pentapetalae</taxon>
        <taxon>asterids</taxon>
        <taxon>lamiids</taxon>
        <taxon>Solanales</taxon>
        <taxon>Solanaceae</taxon>
        <taxon>Nicotianoideae</taxon>
        <taxon>Nicotianeae</taxon>
        <taxon>Nicotiana</taxon>
    </lineage>
</organism>
<geneLocation type="chloroplast"/>
<comment type="function">
    <text evidence="1">Usually encoded in the trnK tRNA gene intron. Probably assists in splicing its own and other chloroplast group II introns.</text>
</comment>
<comment type="subcellular location">
    <subcellularLocation>
        <location>Plastid</location>
        <location>Chloroplast</location>
    </subcellularLocation>
</comment>
<comment type="similarity">
    <text evidence="1">Belongs to the intron maturase 2 family. MatK subfamily.</text>
</comment>
<dbReference type="EMBL" id="AB039992">
    <property type="protein sequence ID" value="BAB64843.1"/>
    <property type="molecule type" value="Genomic_DNA"/>
</dbReference>
<dbReference type="GO" id="GO:0009507">
    <property type="term" value="C:chloroplast"/>
    <property type="evidence" value="ECO:0007669"/>
    <property type="project" value="UniProtKB-SubCell"/>
</dbReference>
<dbReference type="GO" id="GO:0003723">
    <property type="term" value="F:RNA binding"/>
    <property type="evidence" value="ECO:0007669"/>
    <property type="project" value="UniProtKB-KW"/>
</dbReference>
<dbReference type="GO" id="GO:0006397">
    <property type="term" value="P:mRNA processing"/>
    <property type="evidence" value="ECO:0007669"/>
    <property type="project" value="UniProtKB-KW"/>
</dbReference>
<dbReference type="GO" id="GO:0008380">
    <property type="term" value="P:RNA splicing"/>
    <property type="evidence" value="ECO:0007669"/>
    <property type="project" value="UniProtKB-UniRule"/>
</dbReference>
<dbReference type="GO" id="GO:0008033">
    <property type="term" value="P:tRNA processing"/>
    <property type="evidence" value="ECO:0007669"/>
    <property type="project" value="UniProtKB-KW"/>
</dbReference>
<dbReference type="HAMAP" id="MF_01390">
    <property type="entry name" value="MatK"/>
    <property type="match status" value="1"/>
</dbReference>
<dbReference type="InterPro" id="IPR024937">
    <property type="entry name" value="Domain_X"/>
</dbReference>
<dbReference type="InterPro" id="IPR002866">
    <property type="entry name" value="Maturase_MatK"/>
</dbReference>
<dbReference type="InterPro" id="IPR024942">
    <property type="entry name" value="Maturase_MatK_N"/>
</dbReference>
<dbReference type="PANTHER" id="PTHR34811">
    <property type="entry name" value="MATURASE K"/>
    <property type="match status" value="1"/>
</dbReference>
<dbReference type="PANTHER" id="PTHR34811:SF1">
    <property type="entry name" value="MATURASE K"/>
    <property type="match status" value="1"/>
</dbReference>
<dbReference type="Pfam" id="PF01348">
    <property type="entry name" value="Intron_maturas2"/>
    <property type="match status" value="1"/>
</dbReference>
<dbReference type="Pfam" id="PF01824">
    <property type="entry name" value="MatK_N"/>
    <property type="match status" value="1"/>
</dbReference>
<evidence type="ECO:0000255" key="1">
    <source>
        <dbReference type="HAMAP-Rule" id="MF_01390"/>
    </source>
</evidence>
<sequence>MEEIQRYLQPDRSQQHNFLYPLIFQEYIYALAHDHGLNRNRSVLLENPGYNNKFSLLIVKRLITRMYQQNHFLISTNDSNKNAFLGCNKSLYSQMISEGFAFIVEIPFSLRLISSLSSFEGKKIFKSHNLRSIHSTFPFLEDNFSHLNYVLDILIPYPVHLEILVQTLRYWVKDASSLHLLRFFLHEYWNLNSLITSKKPGYSFSKKNQRFFFFLYNSYVYECESTFVFLRNQSSRLRSTSFGALLERINFYGKMERLVEVFTKDFQVTLWLFKDPFMHYVRYQEKSILASKGTFLLMNKWKFYLVNFWQCHFSLCFHTGRIHINQLSNHSRDFMGYLSSVRLNPSMLRSQMLENSFLINNAIKKFDTLVPIIPLIGSLAKANFCTVLGHPISKPVWSDLSDSDIIDRFGRICRNLFHYYSGSSKKXTLYRIKYILRLSCARTLARKHKSTVRTFLKRSGSELLEEFLTSEEQVLSLTFPRASSSLWGVYRSRIWYLDIFCINXLANYQ</sequence>
<protein>
    <recommendedName>
        <fullName evidence="1">Maturase K</fullName>
    </recommendedName>
    <alternativeName>
        <fullName evidence="1">Intron maturase</fullName>
    </alternativeName>
</protein>
<reference key="1">
    <citation type="journal article" date="2000" name="Plant Biol.">
        <title>Molecular phylogeny of Nicotiana (Solanaceae) based on the nucleotide sequence of the matK gene.</title>
        <authorList>
            <person name="Aoki S."/>
            <person name="Ito M."/>
        </authorList>
    </citation>
    <scope>NUCLEOTIDE SEQUENCE [GENOMIC DNA]</scope>
</reference>
<accession>Q95DQ8</accession>
<name>MATK_NICRU</name>
<keyword id="KW-0150">Chloroplast</keyword>
<keyword id="KW-0507">mRNA processing</keyword>
<keyword id="KW-0934">Plastid</keyword>
<keyword id="KW-0694">RNA-binding</keyword>
<keyword id="KW-0819">tRNA processing</keyword>
<gene>
    <name evidence="1" type="primary">matK</name>
</gene>
<proteinExistence type="inferred from homology"/>
<feature type="chain" id="PRO_0000143546" description="Maturase K">
    <location>
        <begin position="1"/>
        <end position="509"/>
    </location>
</feature>